<proteinExistence type="inferred from homology"/>
<sequence length="118" mass="13483">MARVKRGVIARARHKKILKQAKGYYGARSRVYRVAFQAVIKAGQYAYRDRRQRKRQFRQLWIARINAAARQNGISYSKFINGLKKASVEIDRKILADIAVFDKVAFSALVEKAKAALA</sequence>
<dbReference type="EMBL" id="CP000880">
    <property type="protein sequence ID" value="ABX21525.1"/>
    <property type="molecule type" value="Genomic_DNA"/>
</dbReference>
<dbReference type="SMR" id="A9MFC0"/>
<dbReference type="STRING" id="41514.SARI_01633"/>
<dbReference type="KEGG" id="ses:SARI_01633"/>
<dbReference type="HOGENOM" id="CLU_123265_0_1_6"/>
<dbReference type="Proteomes" id="UP000002084">
    <property type="component" value="Chromosome"/>
</dbReference>
<dbReference type="GO" id="GO:1990904">
    <property type="term" value="C:ribonucleoprotein complex"/>
    <property type="evidence" value="ECO:0007669"/>
    <property type="project" value="UniProtKB-KW"/>
</dbReference>
<dbReference type="GO" id="GO:0005840">
    <property type="term" value="C:ribosome"/>
    <property type="evidence" value="ECO:0007669"/>
    <property type="project" value="UniProtKB-KW"/>
</dbReference>
<dbReference type="GO" id="GO:0019843">
    <property type="term" value="F:rRNA binding"/>
    <property type="evidence" value="ECO:0007669"/>
    <property type="project" value="UniProtKB-UniRule"/>
</dbReference>
<dbReference type="GO" id="GO:0003735">
    <property type="term" value="F:structural constituent of ribosome"/>
    <property type="evidence" value="ECO:0007669"/>
    <property type="project" value="InterPro"/>
</dbReference>
<dbReference type="GO" id="GO:0000027">
    <property type="term" value="P:ribosomal large subunit assembly"/>
    <property type="evidence" value="ECO:0007669"/>
    <property type="project" value="UniProtKB-UniRule"/>
</dbReference>
<dbReference type="GO" id="GO:0006412">
    <property type="term" value="P:translation"/>
    <property type="evidence" value="ECO:0007669"/>
    <property type="project" value="InterPro"/>
</dbReference>
<dbReference type="CDD" id="cd07026">
    <property type="entry name" value="Ribosomal_L20"/>
    <property type="match status" value="1"/>
</dbReference>
<dbReference type="FunFam" id="1.10.1900.20:FF:000001">
    <property type="entry name" value="50S ribosomal protein L20"/>
    <property type="match status" value="1"/>
</dbReference>
<dbReference type="Gene3D" id="6.10.160.10">
    <property type="match status" value="1"/>
</dbReference>
<dbReference type="Gene3D" id="1.10.1900.20">
    <property type="entry name" value="Ribosomal protein L20"/>
    <property type="match status" value="1"/>
</dbReference>
<dbReference type="HAMAP" id="MF_00382">
    <property type="entry name" value="Ribosomal_bL20"/>
    <property type="match status" value="1"/>
</dbReference>
<dbReference type="InterPro" id="IPR005813">
    <property type="entry name" value="Ribosomal_bL20"/>
</dbReference>
<dbReference type="InterPro" id="IPR049946">
    <property type="entry name" value="RIBOSOMAL_L20_CS"/>
</dbReference>
<dbReference type="InterPro" id="IPR035566">
    <property type="entry name" value="Ribosomal_protein_bL20_C"/>
</dbReference>
<dbReference type="NCBIfam" id="TIGR01032">
    <property type="entry name" value="rplT_bact"/>
    <property type="match status" value="1"/>
</dbReference>
<dbReference type="PANTHER" id="PTHR10986">
    <property type="entry name" value="39S RIBOSOMAL PROTEIN L20"/>
    <property type="match status" value="1"/>
</dbReference>
<dbReference type="Pfam" id="PF00453">
    <property type="entry name" value="Ribosomal_L20"/>
    <property type="match status" value="1"/>
</dbReference>
<dbReference type="PRINTS" id="PR00062">
    <property type="entry name" value="RIBOSOMALL20"/>
</dbReference>
<dbReference type="SUPFAM" id="SSF74731">
    <property type="entry name" value="Ribosomal protein L20"/>
    <property type="match status" value="1"/>
</dbReference>
<dbReference type="PROSITE" id="PS00937">
    <property type="entry name" value="RIBOSOMAL_L20"/>
    <property type="match status" value="1"/>
</dbReference>
<reference key="1">
    <citation type="submission" date="2007-11" db="EMBL/GenBank/DDBJ databases">
        <authorList>
            <consortium name="The Salmonella enterica serovar Arizonae Genome Sequencing Project"/>
            <person name="McClelland M."/>
            <person name="Sanderson E.K."/>
            <person name="Porwollik S."/>
            <person name="Spieth J."/>
            <person name="Clifton W.S."/>
            <person name="Fulton R."/>
            <person name="Chunyan W."/>
            <person name="Wollam A."/>
            <person name="Shah N."/>
            <person name="Pepin K."/>
            <person name="Bhonagiri V."/>
            <person name="Nash W."/>
            <person name="Johnson M."/>
            <person name="Thiruvilangam P."/>
            <person name="Wilson R."/>
        </authorList>
    </citation>
    <scope>NUCLEOTIDE SEQUENCE [LARGE SCALE GENOMIC DNA]</scope>
    <source>
        <strain>ATCC BAA-731 / CDC346-86 / RSK2980</strain>
    </source>
</reference>
<protein>
    <recommendedName>
        <fullName evidence="1">Large ribosomal subunit protein bL20</fullName>
    </recommendedName>
    <alternativeName>
        <fullName evidence="2">50S ribosomal protein L20</fullName>
    </alternativeName>
</protein>
<feature type="chain" id="PRO_1000080091" description="Large ribosomal subunit protein bL20">
    <location>
        <begin position="1"/>
        <end position="118"/>
    </location>
</feature>
<organism>
    <name type="scientific">Salmonella arizonae (strain ATCC BAA-731 / CDC346-86 / RSK2980)</name>
    <dbReference type="NCBI Taxonomy" id="41514"/>
    <lineage>
        <taxon>Bacteria</taxon>
        <taxon>Pseudomonadati</taxon>
        <taxon>Pseudomonadota</taxon>
        <taxon>Gammaproteobacteria</taxon>
        <taxon>Enterobacterales</taxon>
        <taxon>Enterobacteriaceae</taxon>
        <taxon>Salmonella</taxon>
    </lineage>
</organism>
<name>RL20_SALAR</name>
<comment type="function">
    <text evidence="1">Binds directly to 23S ribosomal RNA and is necessary for the in vitro assembly process of the 50S ribosomal subunit. It is not involved in the protein synthesizing functions of that subunit.</text>
</comment>
<comment type="similarity">
    <text evidence="1">Belongs to the bacterial ribosomal protein bL20 family.</text>
</comment>
<evidence type="ECO:0000255" key="1">
    <source>
        <dbReference type="HAMAP-Rule" id="MF_00382"/>
    </source>
</evidence>
<evidence type="ECO:0000305" key="2"/>
<gene>
    <name evidence="1" type="primary">rplT</name>
    <name type="ordered locus">SARI_01633</name>
</gene>
<keyword id="KW-1185">Reference proteome</keyword>
<keyword id="KW-0687">Ribonucleoprotein</keyword>
<keyword id="KW-0689">Ribosomal protein</keyword>
<keyword id="KW-0694">RNA-binding</keyword>
<keyword id="KW-0699">rRNA-binding</keyword>
<accession>A9MFC0</accession>